<sequence length="628" mass="71028">MAAPPLSSWPWASLGSYKYVLYGAVVWKVAEEWRQQGAAPVGSWWLHLLLLFAARGLTYQFWFSYGNMLFFTRRRRVVPDSVDFRQVDAEWDWDNFLLLQTLIGATLVGSPAVARQQLLLPSLKQAWDPRGWAIALLLHVLVAEPLFYWAHRALHRAPLFSRYHAAHHHASVTTPLTAGFGTPLESLLLTVVIGVPLAGAFLMGVGSVGLVYGHVLLFDFLRSMGYSNVEVISPRVFQAVPLLRYLIYTPTYLSLHHREKDSNFCLFMPIFDLLGGTLNHKSWELQKEVYLGKNDQAPDFVFLAHVVDIMASMHVPFVLRSCSSTPFANHFVLLPFWPVAFGFMLLMWCCSKNFLVSSYRLRGNLHQMWTVPRYGFQYFIPAAKKGINEQIELAILRADRMGVKVLSLAALNKNEALNGGGTLFVNKHPELRVRVVHGNTLTAAVILNEIPSNVKDVFLTGATSKLGRAIALYLCRKKIRVLMLTLSSERFLKIQREAPAEFQQYLVQVTKYQPAQNCKTWLVGKWLSPREQRWAPAGTHFHQFVVPPIIGFRRDCTYGKLAAMRLPKDVQGLGYCEYTMERGVVHACHAGGVVHFLEGWEHHEVGAIDVDRIDVVWKAALKHGLTPA</sequence>
<accession>B8AIW3</accession>
<name>GLO12_ORYSI</name>
<feature type="chain" id="PRO_0000445871" description="Very-long-chain aldehyde decarbonylase GL1-2">
    <location>
        <begin position="1"/>
        <end position="628"/>
    </location>
</feature>
<feature type="transmembrane region" description="Helical" evidence="2">
    <location>
        <begin position="37"/>
        <end position="57"/>
    </location>
</feature>
<feature type="transmembrane region" description="Helical" evidence="2">
    <location>
        <begin position="131"/>
        <end position="151"/>
    </location>
</feature>
<feature type="transmembrane region" description="Helical" evidence="2">
    <location>
        <begin position="191"/>
        <end position="211"/>
    </location>
</feature>
<feature type="transmembrane region" description="Helical" evidence="2">
    <location>
        <begin position="299"/>
        <end position="319"/>
    </location>
</feature>
<feature type="transmembrane region" description="Helical" evidence="2">
    <location>
        <begin position="331"/>
        <end position="351"/>
    </location>
</feature>
<feature type="domain" description="Fatty acid hydroxylase" evidence="2">
    <location>
        <begin position="137"/>
        <end position="277"/>
    </location>
</feature>
<protein>
    <recommendedName>
        <fullName evidence="3">Very-long-chain aldehyde decarbonylase GL1-2</fullName>
        <ecNumber evidence="1">4.1.99.5</ecNumber>
    </recommendedName>
    <alternativeName>
        <fullName evidence="3">Protein GLOSSY 1-2</fullName>
    </alternativeName>
</protein>
<evidence type="ECO:0000250" key="1">
    <source>
        <dbReference type="UniProtKB" id="F4HVY0"/>
    </source>
</evidence>
<evidence type="ECO:0000255" key="2"/>
<evidence type="ECO:0000305" key="3"/>
<evidence type="ECO:0000312" key="4">
    <source>
        <dbReference type="EMBL" id="EEC72610.1"/>
    </source>
</evidence>
<organism>
    <name type="scientific">Oryza sativa subsp. indica</name>
    <name type="common">Rice</name>
    <dbReference type="NCBI Taxonomy" id="39946"/>
    <lineage>
        <taxon>Eukaryota</taxon>
        <taxon>Viridiplantae</taxon>
        <taxon>Streptophyta</taxon>
        <taxon>Embryophyta</taxon>
        <taxon>Tracheophyta</taxon>
        <taxon>Spermatophyta</taxon>
        <taxon>Magnoliopsida</taxon>
        <taxon>Liliopsida</taxon>
        <taxon>Poales</taxon>
        <taxon>Poaceae</taxon>
        <taxon>BOP clade</taxon>
        <taxon>Oryzoideae</taxon>
        <taxon>Oryzeae</taxon>
        <taxon>Oryzinae</taxon>
        <taxon>Oryza</taxon>
        <taxon>Oryza sativa</taxon>
    </lineage>
</organism>
<comment type="function">
    <text evidence="1">Aldehyde decarbonylase involved in the conversion of aldehydes to alkanes. Core component of a very-long-chain alkane synthesis complex.</text>
</comment>
<comment type="catalytic activity">
    <reaction evidence="1">
        <text>a long-chain fatty aldehyde + 2 NADPH + O2 + H(+) = a long-chain alkane + formate + 2 NADP(+) + H2O</text>
        <dbReference type="Rhea" id="RHEA:21440"/>
        <dbReference type="ChEBI" id="CHEBI:15377"/>
        <dbReference type="ChEBI" id="CHEBI:15378"/>
        <dbReference type="ChEBI" id="CHEBI:15379"/>
        <dbReference type="ChEBI" id="CHEBI:15740"/>
        <dbReference type="ChEBI" id="CHEBI:17176"/>
        <dbReference type="ChEBI" id="CHEBI:57783"/>
        <dbReference type="ChEBI" id="CHEBI:58349"/>
        <dbReference type="ChEBI" id="CHEBI:83563"/>
        <dbReference type="EC" id="4.1.99.5"/>
    </reaction>
</comment>
<comment type="subunit">
    <text evidence="1">Homodimer.</text>
</comment>
<comment type="subcellular location">
    <subcellularLocation>
        <location evidence="1">Endoplasmic reticulum membrane</location>
        <topology evidence="1">Multi-pass membrane protein</topology>
    </subcellularLocation>
</comment>
<comment type="similarity">
    <text evidence="3">Belongs to the sterol desaturase family.</text>
</comment>
<gene>
    <name evidence="3" type="primary">GL1-2</name>
    <name evidence="4" type="ORF">OsI_06088</name>
</gene>
<keyword id="KW-0256">Endoplasmic reticulum</keyword>
<keyword id="KW-0456">Lyase</keyword>
<keyword id="KW-0472">Membrane</keyword>
<keyword id="KW-0521">NADP</keyword>
<keyword id="KW-1185">Reference proteome</keyword>
<keyword id="KW-0812">Transmembrane</keyword>
<keyword id="KW-1133">Transmembrane helix</keyword>
<proteinExistence type="inferred from homology"/>
<dbReference type="EC" id="4.1.99.5" evidence="1"/>
<dbReference type="EMBL" id="CM000127">
    <property type="protein sequence ID" value="EEC72610.1"/>
    <property type="molecule type" value="Genomic_DNA"/>
</dbReference>
<dbReference type="SMR" id="B8AIW3"/>
<dbReference type="STRING" id="39946.B8AIW3"/>
<dbReference type="EnsemblPlants" id="BGIOSGA007025-TA">
    <property type="protein sequence ID" value="BGIOSGA007025-PA"/>
    <property type="gene ID" value="BGIOSGA007025"/>
</dbReference>
<dbReference type="Gramene" id="BGIOSGA007025-TA">
    <property type="protein sequence ID" value="BGIOSGA007025-PA"/>
    <property type="gene ID" value="BGIOSGA007025"/>
</dbReference>
<dbReference type="HOGENOM" id="CLU_017842_2_0_1"/>
<dbReference type="OMA" id="PAQNCKT"/>
<dbReference type="Proteomes" id="UP000007015">
    <property type="component" value="Chromosome 2"/>
</dbReference>
<dbReference type="GO" id="GO:0005789">
    <property type="term" value="C:endoplasmic reticulum membrane"/>
    <property type="evidence" value="ECO:0007669"/>
    <property type="project" value="UniProtKB-SubCell"/>
</dbReference>
<dbReference type="GO" id="GO:0071771">
    <property type="term" value="F:aldehyde oxygenase (deformylating) activity"/>
    <property type="evidence" value="ECO:0007669"/>
    <property type="project" value="UniProtKB-EC"/>
</dbReference>
<dbReference type="GO" id="GO:0005506">
    <property type="term" value="F:iron ion binding"/>
    <property type="evidence" value="ECO:0007669"/>
    <property type="project" value="InterPro"/>
</dbReference>
<dbReference type="GO" id="GO:0016491">
    <property type="term" value="F:oxidoreductase activity"/>
    <property type="evidence" value="ECO:0007669"/>
    <property type="project" value="InterPro"/>
</dbReference>
<dbReference type="GO" id="GO:0046184">
    <property type="term" value="P:aldehyde biosynthetic process"/>
    <property type="evidence" value="ECO:0007669"/>
    <property type="project" value="EnsemblPlants"/>
</dbReference>
<dbReference type="GO" id="GO:0043447">
    <property type="term" value="P:alkane biosynthetic process"/>
    <property type="evidence" value="ECO:0007669"/>
    <property type="project" value="EnsemblPlants"/>
</dbReference>
<dbReference type="GO" id="GO:0009737">
    <property type="term" value="P:response to abscisic acid"/>
    <property type="evidence" value="ECO:0007669"/>
    <property type="project" value="EnsemblPlants"/>
</dbReference>
<dbReference type="GO" id="GO:0009414">
    <property type="term" value="P:response to water deprivation"/>
    <property type="evidence" value="ECO:0007669"/>
    <property type="project" value="EnsemblPlants"/>
</dbReference>
<dbReference type="GO" id="GO:0010025">
    <property type="term" value="P:wax biosynthetic process"/>
    <property type="evidence" value="ECO:0007669"/>
    <property type="project" value="EnsemblPlants"/>
</dbReference>
<dbReference type="InterPro" id="IPR021940">
    <property type="entry name" value="CER1-like_C"/>
</dbReference>
<dbReference type="InterPro" id="IPR006694">
    <property type="entry name" value="Fatty_acid_hydroxylase"/>
</dbReference>
<dbReference type="InterPro" id="IPR036291">
    <property type="entry name" value="NAD(P)-bd_dom_sf"/>
</dbReference>
<dbReference type="InterPro" id="IPR050307">
    <property type="entry name" value="Sterol_Desaturase_Related"/>
</dbReference>
<dbReference type="PANTHER" id="PTHR11863">
    <property type="entry name" value="STEROL DESATURASE"/>
    <property type="match status" value="1"/>
</dbReference>
<dbReference type="Pfam" id="PF12076">
    <property type="entry name" value="CER1-like_C"/>
    <property type="match status" value="1"/>
</dbReference>
<dbReference type="Pfam" id="PF04116">
    <property type="entry name" value="FA_hydroxylase"/>
    <property type="match status" value="1"/>
</dbReference>
<dbReference type="SUPFAM" id="SSF51735">
    <property type="entry name" value="NAD(P)-binding Rossmann-fold domains"/>
    <property type="match status" value="1"/>
</dbReference>
<reference key="1">
    <citation type="journal article" date="2005" name="PLoS Biol.">
        <title>The genomes of Oryza sativa: a history of duplications.</title>
        <authorList>
            <person name="Yu J."/>
            <person name="Wang J."/>
            <person name="Lin W."/>
            <person name="Li S."/>
            <person name="Li H."/>
            <person name="Zhou J."/>
            <person name="Ni P."/>
            <person name="Dong W."/>
            <person name="Hu S."/>
            <person name="Zeng C."/>
            <person name="Zhang J."/>
            <person name="Zhang Y."/>
            <person name="Li R."/>
            <person name="Xu Z."/>
            <person name="Li S."/>
            <person name="Li X."/>
            <person name="Zheng H."/>
            <person name="Cong L."/>
            <person name="Lin L."/>
            <person name="Yin J."/>
            <person name="Geng J."/>
            <person name="Li G."/>
            <person name="Shi J."/>
            <person name="Liu J."/>
            <person name="Lv H."/>
            <person name="Li J."/>
            <person name="Wang J."/>
            <person name="Deng Y."/>
            <person name="Ran L."/>
            <person name="Shi X."/>
            <person name="Wang X."/>
            <person name="Wu Q."/>
            <person name="Li C."/>
            <person name="Ren X."/>
            <person name="Wang J."/>
            <person name="Wang X."/>
            <person name="Li D."/>
            <person name="Liu D."/>
            <person name="Zhang X."/>
            <person name="Ji Z."/>
            <person name="Zhao W."/>
            <person name="Sun Y."/>
            <person name="Zhang Z."/>
            <person name="Bao J."/>
            <person name="Han Y."/>
            <person name="Dong L."/>
            <person name="Ji J."/>
            <person name="Chen P."/>
            <person name="Wu S."/>
            <person name="Liu J."/>
            <person name="Xiao Y."/>
            <person name="Bu D."/>
            <person name="Tan J."/>
            <person name="Yang L."/>
            <person name="Ye C."/>
            <person name="Zhang J."/>
            <person name="Xu J."/>
            <person name="Zhou Y."/>
            <person name="Yu Y."/>
            <person name="Zhang B."/>
            <person name="Zhuang S."/>
            <person name="Wei H."/>
            <person name="Liu B."/>
            <person name="Lei M."/>
            <person name="Yu H."/>
            <person name="Li Y."/>
            <person name="Xu H."/>
            <person name="Wei S."/>
            <person name="He X."/>
            <person name="Fang L."/>
            <person name="Zhang Z."/>
            <person name="Zhang Y."/>
            <person name="Huang X."/>
            <person name="Su Z."/>
            <person name="Tong W."/>
            <person name="Li J."/>
            <person name="Tong Z."/>
            <person name="Li S."/>
            <person name="Ye J."/>
            <person name="Wang L."/>
            <person name="Fang L."/>
            <person name="Lei T."/>
            <person name="Chen C.-S."/>
            <person name="Chen H.-C."/>
            <person name="Xu Z."/>
            <person name="Li H."/>
            <person name="Huang H."/>
            <person name="Zhang F."/>
            <person name="Xu H."/>
            <person name="Li N."/>
            <person name="Zhao C."/>
            <person name="Li S."/>
            <person name="Dong L."/>
            <person name="Huang Y."/>
            <person name="Li L."/>
            <person name="Xi Y."/>
            <person name="Qi Q."/>
            <person name="Li W."/>
            <person name="Zhang B."/>
            <person name="Hu W."/>
            <person name="Zhang Y."/>
            <person name="Tian X."/>
            <person name="Jiao Y."/>
            <person name="Liang X."/>
            <person name="Jin J."/>
            <person name="Gao L."/>
            <person name="Zheng W."/>
            <person name="Hao B."/>
            <person name="Liu S.-M."/>
            <person name="Wang W."/>
            <person name="Yuan L."/>
            <person name="Cao M."/>
            <person name="McDermott J."/>
            <person name="Samudrala R."/>
            <person name="Wang J."/>
            <person name="Wong G.K.-S."/>
            <person name="Yang H."/>
        </authorList>
    </citation>
    <scope>NUCLEOTIDE SEQUENCE [LARGE SCALE GENOMIC DNA]</scope>
    <source>
        <strain>cv. 93-11</strain>
    </source>
</reference>